<comment type="function">
    <text evidence="1">Catalyzes the conversion of (8S)-3',8-cyclo-7,8-dihydroguanosine 5'-triphosphate to cyclic pyranopterin monophosphate (cPMP).</text>
</comment>
<comment type="catalytic activity">
    <reaction evidence="1">
        <text>(8S)-3',8-cyclo-7,8-dihydroguanosine 5'-triphosphate = cyclic pyranopterin phosphate + diphosphate</text>
        <dbReference type="Rhea" id="RHEA:49580"/>
        <dbReference type="ChEBI" id="CHEBI:33019"/>
        <dbReference type="ChEBI" id="CHEBI:59648"/>
        <dbReference type="ChEBI" id="CHEBI:131766"/>
        <dbReference type="EC" id="4.6.1.17"/>
    </reaction>
</comment>
<comment type="pathway">
    <text evidence="1">Cofactor biosynthesis; molybdopterin biosynthesis.</text>
</comment>
<comment type="subunit">
    <text evidence="1">Homohexamer; trimer of dimers.</text>
</comment>
<comment type="similarity">
    <text evidence="1">Belongs to the MoaC family.</text>
</comment>
<accession>B0UUN5</accession>
<proteinExistence type="inferred from homology"/>
<organism>
    <name type="scientific">Histophilus somni (strain 2336)</name>
    <name type="common">Haemophilus somnus</name>
    <dbReference type="NCBI Taxonomy" id="228400"/>
    <lineage>
        <taxon>Bacteria</taxon>
        <taxon>Pseudomonadati</taxon>
        <taxon>Pseudomonadota</taxon>
        <taxon>Gammaproteobacteria</taxon>
        <taxon>Pasteurellales</taxon>
        <taxon>Pasteurellaceae</taxon>
        <taxon>Histophilus</taxon>
    </lineage>
</organism>
<reference key="1">
    <citation type="submission" date="2008-02" db="EMBL/GenBank/DDBJ databases">
        <title>Complete sequence of Haemophilus somnus 2336.</title>
        <authorList>
            <consortium name="US DOE Joint Genome Institute"/>
            <person name="Siddaramappa S."/>
            <person name="Duncan A.J."/>
            <person name="Challacombe J.F."/>
            <person name="Rainey D."/>
            <person name="Gillaspy A.F."/>
            <person name="Carson M."/>
            <person name="Gipson J."/>
            <person name="Gipson M."/>
            <person name="Bruce D."/>
            <person name="Detter J.C."/>
            <person name="Han C.S."/>
            <person name="Land M."/>
            <person name="Tapia R."/>
            <person name="Thompson L.S."/>
            <person name="Orvis J."/>
            <person name="Zaitshik J."/>
            <person name="Barnes G."/>
            <person name="Brettin T.S."/>
            <person name="Dyer D.W."/>
            <person name="Inzana T.J."/>
        </authorList>
    </citation>
    <scope>NUCLEOTIDE SEQUENCE [LARGE SCALE GENOMIC DNA]</scope>
    <source>
        <strain>2336</strain>
    </source>
</reference>
<evidence type="ECO:0000255" key="1">
    <source>
        <dbReference type="HAMAP-Rule" id="MF_01224"/>
    </source>
</evidence>
<name>MOAC_HISS2</name>
<protein>
    <recommendedName>
        <fullName evidence="1">Cyclic pyranopterin monophosphate synthase</fullName>
        <ecNumber evidence="1">4.6.1.17</ecNumber>
    </recommendedName>
    <alternativeName>
        <fullName evidence="1">Molybdenum cofactor biosynthesis protein C</fullName>
    </alternativeName>
</protein>
<feature type="chain" id="PRO_1000085676" description="Cyclic pyranopterin monophosphate synthase">
    <location>
        <begin position="1"/>
        <end position="158"/>
    </location>
</feature>
<feature type="active site" evidence="1">
    <location>
        <position position="128"/>
    </location>
</feature>
<feature type="binding site" evidence="1">
    <location>
        <begin position="75"/>
        <end position="77"/>
    </location>
    <ligand>
        <name>substrate</name>
    </ligand>
</feature>
<feature type="binding site" evidence="1">
    <location>
        <begin position="113"/>
        <end position="114"/>
    </location>
    <ligand>
        <name>substrate</name>
    </ligand>
</feature>
<gene>
    <name evidence="1" type="primary">moaC</name>
    <name type="ordered locus">HSM_1508</name>
</gene>
<sequence length="158" mass="17210">MTTFTHINHQGEANMVDVSAKQDTVREARAEAFVRMLPTTLNMILSGQHHKGDVFATARIAGIQAAKRTWELIPLCHPLLLSKVEVNLTALPEISSVRVESICKLSGKTGVEMEALTAASIAALTIYDMCKAVQKDIVIEQVRLLEKSGGKSGHFIAE</sequence>
<keyword id="KW-0456">Lyase</keyword>
<keyword id="KW-0501">Molybdenum cofactor biosynthesis</keyword>
<dbReference type="EC" id="4.6.1.17" evidence="1"/>
<dbReference type="EMBL" id="CP000947">
    <property type="protein sequence ID" value="ACA31261.1"/>
    <property type="molecule type" value="Genomic_DNA"/>
</dbReference>
<dbReference type="RefSeq" id="WP_012340647.1">
    <property type="nucleotide sequence ID" value="NC_010519.1"/>
</dbReference>
<dbReference type="SMR" id="B0UUN5"/>
<dbReference type="STRING" id="228400.HSM_1508"/>
<dbReference type="GeneID" id="31487810"/>
<dbReference type="KEGG" id="hsm:HSM_1508"/>
<dbReference type="HOGENOM" id="CLU_074693_1_1_6"/>
<dbReference type="UniPathway" id="UPA00344"/>
<dbReference type="GO" id="GO:0061799">
    <property type="term" value="F:cyclic pyranopterin monophosphate synthase activity"/>
    <property type="evidence" value="ECO:0007669"/>
    <property type="project" value="UniProtKB-UniRule"/>
</dbReference>
<dbReference type="GO" id="GO:0061798">
    <property type="term" value="F:GTP 3',8'-cyclase activity"/>
    <property type="evidence" value="ECO:0007669"/>
    <property type="project" value="TreeGrafter"/>
</dbReference>
<dbReference type="GO" id="GO:0006777">
    <property type="term" value="P:Mo-molybdopterin cofactor biosynthetic process"/>
    <property type="evidence" value="ECO:0007669"/>
    <property type="project" value="UniProtKB-UniRule"/>
</dbReference>
<dbReference type="CDD" id="cd01420">
    <property type="entry name" value="MoaC_PE"/>
    <property type="match status" value="1"/>
</dbReference>
<dbReference type="FunFam" id="3.30.70.640:FF:000001">
    <property type="entry name" value="Cyclic pyranopterin monophosphate synthase"/>
    <property type="match status" value="1"/>
</dbReference>
<dbReference type="Gene3D" id="3.30.70.640">
    <property type="entry name" value="Molybdopterin cofactor biosynthesis C (MoaC) domain"/>
    <property type="match status" value="1"/>
</dbReference>
<dbReference type="HAMAP" id="MF_01224_B">
    <property type="entry name" value="MoaC_B"/>
    <property type="match status" value="1"/>
</dbReference>
<dbReference type="InterPro" id="IPR023045">
    <property type="entry name" value="MoaC"/>
</dbReference>
<dbReference type="InterPro" id="IPR047594">
    <property type="entry name" value="MoaC_bact/euk"/>
</dbReference>
<dbReference type="InterPro" id="IPR036522">
    <property type="entry name" value="MoaC_sf"/>
</dbReference>
<dbReference type="InterPro" id="IPR050105">
    <property type="entry name" value="MoCo_biosynth_MoaA/MoaC"/>
</dbReference>
<dbReference type="InterPro" id="IPR002820">
    <property type="entry name" value="Mopterin_CF_biosynth-C_dom"/>
</dbReference>
<dbReference type="NCBIfam" id="TIGR00581">
    <property type="entry name" value="moaC"/>
    <property type="match status" value="1"/>
</dbReference>
<dbReference type="NCBIfam" id="NF006870">
    <property type="entry name" value="PRK09364.1"/>
    <property type="match status" value="1"/>
</dbReference>
<dbReference type="PANTHER" id="PTHR22960:SF0">
    <property type="entry name" value="MOLYBDENUM COFACTOR BIOSYNTHESIS PROTEIN 1"/>
    <property type="match status" value="1"/>
</dbReference>
<dbReference type="PANTHER" id="PTHR22960">
    <property type="entry name" value="MOLYBDOPTERIN COFACTOR SYNTHESIS PROTEIN A"/>
    <property type="match status" value="1"/>
</dbReference>
<dbReference type="Pfam" id="PF01967">
    <property type="entry name" value="MoaC"/>
    <property type="match status" value="1"/>
</dbReference>
<dbReference type="SUPFAM" id="SSF55040">
    <property type="entry name" value="Molybdenum cofactor biosynthesis protein C, MoaC"/>
    <property type="match status" value="1"/>
</dbReference>